<gene>
    <name evidence="1" type="primary">atpF</name>
    <name type="ordered locus">BLi03930</name>
    <name type="ordered locus">BL03996</name>
</gene>
<evidence type="ECO:0000255" key="1">
    <source>
        <dbReference type="HAMAP-Rule" id="MF_01398"/>
    </source>
</evidence>
<organism>
    <name type="scientific">Bacillus licheniformis (strain ATCC 14580 / DSM 13 / JCM 2505 / CCUG 7422 / NBRC 12200 / NCIMB 9375 / NCTC 10341 / NRRL NRS-1264 / Gibson 46)</name>
    <dbReference type="NCBI Taxonomy" id="279010"/>
    <lineage>
        <taxon>Bacteria</taxon>
        <taxon>Bacillati</taxon>
        <taxon>Bacillota</taxon>
        <taxon>Bacilli</taxon>
        <taxon>Bacillales</taxon>
        <taxon>Bacillaceae</taxon>
        <taxon>Bacillus</taxon>
    </lineage>
</organism>
<keyword id="KW-0066">ATP synthesis</keyword>
<keyword id="KW-1003">Cell membrane</keyword>
<keyword id="KW-0138">CF(0)</keyword>
<keyword id="KW-0375">Hydrogen ion transport</keyword>
<keyword id="KW-0406">Ion transport</keyword>
<keyword id="KW-0472">Membrane</keyword>
<keyword id="KW-1185">Reference proteome</keyword>
<keyword id="KW-0812">Transmembrane</keyword>
<keyword id="KW-1133">Transmembrane helix</keyword>
<keyword id="KW-0813">Transport</keyword>
<feature type="chain" id="PRO_0000368332" description="ATP synthase subunit b">
    <location>
        <begin position="1"/>
        <end position="172"/>
    </location>
</feature>
<feature type="transmembrane region" description="Helical" evidence="1">
    <location>
        <begin position="12"/>
        <end position="32"/>
    </location>
</feature>
<proteinExistence type="inferred from homology"/>
<name>ATPF_BACLD</name>
<sequence>MSFLPQVMGAGVGFNAGTMLFQLVAMLILLALLKKYALGPLLNIMKEREDYITGEISSAEKKNEEAKKLIEEQQALLKEAREESQSLIENAKKLGEQQKDEIIKAARQEAERMKESARSEIVKERDQAVTALREQVASLSVMIASKVIEKELDEQAQEKLIQDYLKEVGESR</sequence>
<comment type="function">
    <text evidence="1">F(1)F(0) ATP synthase produces ATP from ADP in the presence of a proton or sodium gradient. F-type ATPases consist of two structural domains, F(1) containing the extramembraneous catalytic core and F(0) containing the membrane proton channel, linked together by a central stalk and a peripheral stalk. During catalysis, ATP synthesis in the catalytic domain of F(1) is coupled via a rotary mechanism of the central stalk subunits to proton translocation.</text>
</comment>
<comment type="function">
    <text evidence="1">Component of the F(0) channel, it forms part of the peripheral stalk, linking F(1) to F(0).</text>
</comment>
<comment type="subunit">
    <text evidence="1">F-type ATPases have 2 components, F(1) - the catalytic core - and F(0) - the membrane proton channel. F(1) has five subunits: alpha(3), beta(3), gamma(1), delta(1), epsilon(1). F(0) has three main subunits: a(1), b(2) and c(10-14). The alpha and beta chains form an alternating ring which encloses part of the gamma chain. F(1) is attached to F(0) by a central stalk formed by the gamma and epsilon chains, while a peripheral stalk is formed by the delta and b chains.</text>
</comment>
<comment type="subcellular location">
    <subcellularLocation>
        <location evidence="1">Cell membrane</location>
        <topology evidence="1">Single-pass membrane protein</topology>
    </subcellularLocation>
</comment>
<comment type="similarity">
    <text evidence="1">Belongs to the ATPase B chain family.</text>
</comment>
<dbReference type="EMBL" id="CP000002">
    <property type="protein sequence ID" value="AAU25370.2"/>
    <property type="molecule type" value="Genomic_DNA"/>
</dbReference>
<dbReference type="EMBL" id="AE017333">
    <property type="protein sequence ID" value="AAU42744.1"/>
    <property type="molecule type" value="Genomic_DNA"/>
</dbReference>
<dbReference type="RefSeq" id="WP_003186013.1">
    <property type="nucleotide sequence ID" value="NC_006322.1"/>
</dbReference>
<dbReference type="SMR" id="Q65DX0"/>
<dbReference type="STRING" id="279010.BL03996"/>
<dbReference type="GeneID" id="92859497"/>
<dbReference type="KEGG" id="bld:BLi03930"/>
<dbReference type="KEGG" id="bli:BL03996"/>
<dbReference type="eggNOG" id="COG0711">
    <property type="taxonomic scope" value="Bacteria"/>
</dbReference>
<dbReference type="HOGENOM" id="CLU_079215_4_2_9"/>
<dbReference type="Proteomes" id="UP000000606">
    <property type="component" value="Chromosome"/>
</dbReference>
<dbReference type="GO" id="GO:0005886">
    <property type="term" value="C:plasma membrane"/>
    <property type="evidence" value="ECO:0007669"/>
    <property type="project" value="UniProtKB-SubCell"/>
</dbReference>
<dbReference type="GO" id="GO:0045259">
    <property type="term" value="C:proton-transporting ATP synthase complex"/>
    <property type="evidence" value="ECO:0007669"/>
    <property type="project" value="UniProtKB-KW"/>
</dbReference>
<dbReference type="GO" id="GO:0046933">
    <property type="term" value="F:proton-transporting ATP synthase activity, rotational mechanism"/>
    <property type="evidence" value="ECO:0007669"/>
    <property type="project" value="UniProtKB-UniRule"/>
</dbReference>
<dbReference type="GO" id="GO:0046961">
    <property type="term" value="F:proton-transporting ATPase activity, rotational mechanism"/>
    <property type="evidence" value="ECO:0007669"/>
    <property type="project" value="TreeGrafter"/>
</dbReference>
<dbReference type="CDD" id="cd06503">
    <property type="entry name" value="ATP-synt_Fo_b"/>
    <property type="match status" value="1"/>
</dbReference>
<dbReference type="Gene3D" id="1.20.5.620">
    <property type="entry name" value="F1F0 ATP synthase subunit B, membrane domain"/>
    <property type="match status" value="1"/>
</dbReference>
<dbReference type="HAMAP" id="MF_01398">
    <property type="entry name" value="ATP_synth_b_bprime"/>
    <property type="match status" value="1"/>
</dbReference>
<dbReference type="InterPro" id="IPR028987">
    <property type="entry name" value="ATP_synth_B-like_membr_sf"/>
</dbReference>
<dbReference type="InterPro" id="IPR002146">
    <property type="entry name" value="ATP_synth_b/b'su_bac/chlpt"/>
</dbReference>
<dbReference type="InterPro" id="IPR005864">
    <property type="entry name" value="ATP_synth_F0_bsu_bac"/>
</dbReference>
<dbReference type="InterPro" id="IPR050059">
    <property type="entry name" value="ATP_synthase_B_chain"/>
</dbReference>
<dbReference type="NCBIfam" id="TIGR01144">
    <property type="entry name" value="ATP_synt_b"/>
    <property type="match status" value="1"/>
</dbReference>
<dbReference type="PANTHER" id="PTHR33445:SF1">
    <property type="entry name" value="ATP SYNTHASE SUBUNIT B"/>
    <property type="match status" value="1"/>
</dbReference>
<dbReference type="PANTHER" id="PTHR33445">
    <property type="entry name" value="ATP SYNTHASE SUBUNIT B', CHLOROPLASTIC"/>
    <property type="match status" value="1"/>
</dbReference>
<dbReference type="Pfam" id="PF00430">
    <property type="entry name" value="ATP-synt_B"/>
    <property type="match status" value="1"/>
</dbReference>
<dbReference type="SUPFAM" id="SSF81573">
    <property type="entry name" value="F1F0 ATP synthase subunit B, membrane domain"/>
    <property type="match status" value="1"/>
</dbReference>
<protein>
    <recommendedName>
        <fullName evidence="1">ATP synthase subunit b</fullName>
    </recommendedName>
    <alternativeName>
        <fullName evidence="1">ATP synthase F(0) sector subunit b</fullName>
    </alternativeName>
    <alternativeName>
        <fullName evidence="1">ATPase subunit I</fullName>
    </alternativeName>
    <alternativeName>
        <fullName evidence="1">F-type ATPase subunit b</fullName>
        <shortName evidence="1">F-ATPase subunit b</shortName>
    </alternativeName>
</protein>
<accession>Q65DX0</accession>
<accession>Q62PE1</accession>
<reference key="1">
    <citation type="journal article" date="2004" name="J. Mol. Microbiol. Biotechnol.">
        <title>The complete genome sequence of Bacillus licheniformis DSM13, an organism with great industrial potential.</title>
        <authorList>
            <person name="Veith B."/>
            <person name="Herzberg C."/>
            <person name="Steckel S."/>
            <person name="Feesche J."/>
            <person name="Maurer K.H."/>
            <person name="Ehrenreich P."/>
            <person name="Baeumer S."/>
            <person name="Henne A."/>
            <person name="Liesegang H."/>
            <person name="Merkl R."/>
            <person name="Ehrenreich A."/>
            <person name="Gottschalk G."/>
        </authorList>
    </citation>
    <scope>NUCLEOTIDE SEQUENCE [LARGE SCALE GENOMIC DNA]</scope>
    <source>
        <strain>ATCC 14580 / DSM 13 / JCM 2505 / CCUG 7422 / NBRC 12200 / NCIMB 9375 / NCTC 10341 / NRRL NRS-1264 / Gibson 46</strain>
    </source>
</reference>
<reference key="2">
    <citation type="journal article" date="2004" name="Genome Biol.">
        <title>Complete genome sequence of the industrial bacterium Bacillus licheniformis and comparisons with closely related Bacillus species.</title>
        <authorList>
            <person name="Rey M.W."/>
            <person name="Ramaiya P."/>
            <person name="Nelson B.A."/>
            <person name="Brody-Karpin S.D."/>
            <person name="Zaretsky E.J."/>
            <person name="Tang M."/>
            <person name="Lopez de Leon A."/>
            <person name="Xiang H."/>
            <person name="Gusti V."/>
            <person name="Clausen I.G."/>
            <person name="Olsen P.B."/>
            <person name="Rasmussen M.D."/>
            <person name="Andersen J.T."/>
            <person name="Joergensen P.L."/>
            <person name="Larsen T.S."/>
            <person name="Sorokin A."/>
            <person name="Bolotin A."/>
            <person name="Lapidus A."/>
            <person name="Galleron N."/>
            <person name="Ehrlich S.D."/>
            <person name="Berka R.M."/>
        </authorList>
    </citation>
    <scope>NUCLEOTIDE SEQUENCE [LARGE SCALE GENOMIC DNA]</scope>
    <source>
        <strain>ATCC 14580 / DSM 13 / JCM 2505 / CCUG 7422 / NBRC 12200 / NCIMB 9375 / NCTC 10341 / NRRL NRS-1264 / Gibson 46</strain>
    </source>
</reference>